<protein>
    <recommendedName>
        <fullName evidence="1">Dihydroorotate dehydrogenase (quinone)</fullName>
        <ecNumber evidence="1">1.3.5.2</ecNumber>
    </recommendedName>
    <alternativeName>
        <fullName evidence="1">DHOdehase</fullName>
        <shortName evidence="1">DHOD</shortName>
        <shortName evidence="1">DHODase</shortName>
    </alternativeName>
    <alternativeName>
        <fullName evidence="1">Dihydroorotate oxidase</fullName>
    </alternativeName>
</protein>
<name>PYRD_MYCSS</name>
<keyword id="KW-1003">Cell membrane</keyword>
<keyword id="KW-0285">Flavoprotein</keyword>
<keyword id="KW-0288">FMN</keyword>
<keyword id="KW-0472">Membrane</keyword>
<keyword id="KW-0560">Oxidoreductase</keyword>
<keyword id="KW-0665">Pyrimidine biosynthesis</keyword>
<dbReference type="EC" id="1.3.5.2" evidence="1"/>
<dbReference type="EMBL" id="CP000384">
    <property type="protein sequence ID" value="ABG09269.1"/>
    <property type="molecule type" value="Genomic_DNA"/>
</dbReference>
<dbReference type="SMR" id="Q1B765"/>
<dbReference type="KEGG" id="mmc:Mmcs_3162"/>
<dbReference type="HOGENOM" id="CLU_013640_2_0_11"/>
<dbReference type="BioCyc" id="MSP164756:G1G6O-3227-MONOMER"/>
<dbReference type="UniPathway" id="UPA00070">
    <property type="reaction ID" value="UER00946"/>
</dbReference>
<dbReference type="GO" id="GO:0005737">
    <property type="term" value="C:cytoplasm"/>
    <property type="evidence" value="ECO:0007669"/>
    <property type="project" value="InterPro"/>
</dbReference>
<dbReference type="GO" id="GO:0005886">
    <property type="term" value="C:plasma membrane"/>
    <property type="evidence" value="ECO:0007669"/>
    <property type="project" value="UniProtKB-SubCell"/>
</dbReference>
<dbReference type="GO" id="GO:0106430">
    <property type="term" value="F:dihydroorotate dehydrogenase (quinone) activity"/>
    <property type="evidence" value="ECO:0007669"/>
    <property type="project" value="UniProtKB-EC"/>
</dbReference>
<dbReference type="GO" id="GO:0006207">
    <property type="term" value="P:'de novo' pyrimidine nucleobase biosynthetic process"/>
    <property type="evidence" value="ECO:0007669"/>
    <property type="project" value="InterPro"/>
</dbReference>
<dbReference type="GO" id="GO:0044205">
    <property type="term" value="P:'de novo' UMP biosynthetic process"/>
    <property type="evidence" value="ECO:0007669"/>
    <property type="project" value="UniProtKB-UniRule"/>
</dbReference>
<dbReference type="CDD" id="cd04738">
    <property type="entry name" value="DHOD_2_like"/>
    <property type="match status" value="1"/>
</dbReference>
<dbReference type="FunFam" id="3.20.20.70:FF:000123">
    <property type="entry name" value="Dihydroorotate dehydrogenase (quinone)"/>
    <property type="match status" value="1"/>
</dbReference>
<dbReference type="Gene3D" id="3.20.20.70">
    <property type="entry name" value="Aldolase class I"/>
    <property type="match status" value="1"/>
</dbReference>
<dbReference type="HAMAP" id="MF_00225">
    <property type="entry name" value="DHO_dh_type2"/>
    <property type="match status" value="1"/>
</dbReference>
<dbReference type="InterPro" id="IPR013785">
    <property type="entry name" value="Aldolase_TIM"/>
</dbReference>
<dbReference type="InterPro" id="IPR050074">
    <property type="entry name" value="DHO_dehydrogenase"/>
</dbReference>
<dbReference type="InterPro" id="IPR005719">
    <property type="entry name" value="Dihydroorotate_DH_2"/>
</dbReference>
<dbReference type="InterPro" id="IPR005720">
    <property type="entry name" value="Dihydroorotate_DH_cat"/>
</dbReference>
<dbReference type="InterPro" id="IPR001295">
    <property type="entry name" value="Dihydroorotate_DH_CS"/>
</dbReference>
<dbReference type="NCBIfam" id="NF003645">
    <property type="entry name" value="PRK05286.1-2"/>
    <property type="match status" value="1"/>
</dbReference>
<dbReference type="NCBIfam" id="NF003648">
    <property type="entry name" value="PRK05286.2-1"/>
    <property type="match status" value="1"/>
</dbReference>
<dbReference type="NCBIfam" id="NF003652">
    <property type="entry name" value="PRK05286.2-5"/>
    <property type="match status" value="1"/>
</dbReference>
<dbReference type="NCBIfam" id="TIGR01036">
    <property type="entry name" value="pyrD_sub2"/>
    <property type="match status" value="1"/>
</dbReference>
<dbReference type="PANTHER" id="PTHR48109:SF4">
    <property type="entry name" value="DIHYDROOROTATE DEHYDROGENASE (QUINONE), MITOCHONDRIAL"/>
    <property type="match status" value="1"/>
</dbReference>
<dbReference type="PANTHER" id="PTHR48109">
    <property type="entry name" value="DIHYDROOROTATE DEHYDROGENASE (QUINONE), MITOCHONDRIAL-RELATED"/>
    <property type="match status" value="1"/>
</dbReference>
<dbReference type="Pfam" id="PF01180">
    <property type="entry name" value="DHO_dh"/>
    <property type="match status" value="1"/>
</dbReference>
<dbReference type="SUPFAM" id="SSF51395">
    <property type="entry name" value="FMN-linked oxidoreductases"/>
    <property type="match status" value="1"/>
</dbReference>
<dbReference type="PROSITE" id="PS00911">
    <property type="entry name" value="DHODEHASE_1"/>
    <property type="match status" value="1"/>
</dbReference>
<dbReference type="PROSITE" id="PS00912">
    <property type="entry name" value="DHODEHASE_2"/>
    <property type="match status" value="1"/>
</dbReference>
<feature type="chain" id="PRO_0000336478" description="Dihydroorotate dehydrogenase (quinone)">
    <location>
        <begin position="1"/>
        <end position="356"/>
    </location>
</feature>
<feature type="active site" description="Nucleophile" evidence="1">
    <location>
        <position position="181"/>
    </location>
</feature>
<feature type="binding site" evidence="1">
    <location>
        <begin position="68"/>
        <end position="72"/>
    </location>
    <ligand>
        <name>FMN</name>
        <dbReference type="ChEBI" id="CHEBI:58210"/>
    </ligand>
</feature>
<feature type="binding site" evidence="1">
    <location>
        <position position="72"/>
    </location>
    <ligand>
        <name>substrate</name>
    </ligand>
</feature>
<feature type="binding site" evidence="1">
    <location>
        <position position="92"/>
    </location>
    <ligand>
        <name>FMN</name>
        <dbReference type="ChEBI" id="CHEBI:58210"/>
    </ligand>
</feature>
<feature type="binding site" evidence="1">
    <location>
        <begin position="117"/>
        <end position="121"/>
    </location>
    <ligand>
        <name>substrate</name>
    </ligand>
</feature>
<feature type="binding site" evidence="1">
    <location>
        <position position="145"/>
    </location>
    <ligand>
        <name>FMN</name>
        <dbReference type="ChEBI" id="CHEBI:58210"/>
    </ligand>
</feature>
<feature type="binding site" evidence="1">
    <location>
        <position position="178"/>
    </location>
    <ligand>
        <name>FMN</name>
        <dbReference type="ChEBI" id="CHEBI:58210"/>
    </ligand>
</feature>
<feature type="binding site" evidence="1">
    <location>
        <position position="178"/>
    </location>
    <ligand>
        <name>substrate</name>
    </ligand>
</feature>
<feature type="binding site" evidence="1">
    <location>
        <position position="183"/>
    </location>
    <ligand>
        <name>substrate</name>
    </ligand>
</feature>
<feature type="binding site" evidence="1">
    <location>
        <position position="214"/>
    </location>
    <ligand>
        <name>FMN</name>
        <dbReference type="ChEBI" id="CHEBI:58210"/>
    </ligand>
</feature>
<feature type="binding site" evidence="1">
    <location>
        <position position="242"/>
    </location>
    <ligand>
        <name>FMN</name>
        <dbReference type="ChEBI" id="CHEBI:58210"/>
    </ligand>
</feature>
<feature type="binding site" evidence="1">
    <location>
        <begin position="243"/>
        <end position="244"/>
    </location>
    <ligand>
        <name>substrate</name>
    </ligand>
</feature>
<feature type="binding site" evidence="1">
    <location>
        <position position="266"/>
    </location>
    <ligand>
        <name>FMN</name>
        <dbReference type="ChEBI" id="CHEBI:58210"/>
    </ligand>
</feature>
<feature type="binding site" evidence="1">
    <location>
        <position position="295"/>
    </location>
    <ligand>
        <name>FMN</name>
        <dbReference type="ChEBI" id="CHEBI:58210"/>
    </ligand>
</feature>
<feature type="binding site" evidence="1">
    <location>
        <begin position="316"/>
        <end position="317"/>
    </location>
    <ligand>
        <name>FMN</name>
        <dbReference type="ChEBI" id="CHEBI:58210"/>
    </ligand>
</feature>
<comment type="function">
    <text evidence="1">Catalyzes the conversion of dihydroorotate to orotate with quinone as electron acceptor.</text>
</comment>
<comment type="catalytic activity">
    <reaction evidence="1">
        <text>(S)-dihydroorotate + a quinone = orotate + a quinol</text>
        <dbReference type="Rhea" id="RHEA:30187"/>
        <dbReference type="ChEBI" id="CHEBI:24646"/>
        <dbReference type="ChEBI" id="CHEBI:30839"/>
        <dbReference type="ChEBI" id="CHEBI:30864"/>
        <dbReference type="ChEBI" id="CHEBI:132124"/>
        <dbReference type="EC" id="1.3.5.2"/>
    </reaction>
</comment>
<comment type="cofactor">
    <cofactor evidence="1">
        <name>FMN</name>
        <dbReference type="ChEBI" id="CHEBI:58210"/>
    </cofactor>
    <text evidence="1">Binds 1 FMN per subunit.</text>
</comment>
<comment type="pathway">
    <text evidence="1">Pyrimidine metabolism; UMP biosynthesis via de novo pathway; orotate from (S)-dihydroorotate (quinone route): step 1/1.</text>
</comment>
<comment type="subunit">
    <text evidence="1">Monomer.</text>
</comment>
<comment type="subcellular location">
    <subcellularLocation>
        <location evidence="1">Cell membrane</location>
        <topology evidence="1">Peripheral membrane protein</topology>
    </subcellularLocation>
</comment>
<comment type="similarity">
    <text evidence="1">Belongs to the dihydroorotate dehydrogenase family. Type 2 subfamily.</text>
</comment>
<sequence length="356" mass="37863">MTGYHALRRVLFLISPERIHTWVFALLRAVTTPDLLRRALQGRLAPRDPVLASTVFGVRFPGPLGLAAGFDKDGRGLHTWPALGFGYAEVGTVTAHPQPGNPEPRLFRLPEDRALLNRMGFNNDGAARLAQRLTRHTSDAPVGVNIGKTKATPADRAVEDYAQSARQLGPLATFLVVNVSSPNTPGLRDLQAVESLRPILTAVRAQTSTPVLVKIAPDLSDADVDEIADLAVELGLAGIVATNTTISRAGLKTPGVEELGPGGVSGAPVAARSLEVLRRLYRRAGDRLVLISVGGIETADDAWERITSGASLLQGYTGFVYGGGLWAKHIHDGLATRLRAEGFTSLSDAVGSAMRQ</sequence>
<evidence type="ECO:0000255" key="1">
    <source>
        <dbReference type="HAMAP-Rule" id="MF_00225"/>
    </source>
</evidence>
<accession>Q1B765</accession>
<reference key="1">
    <citation type="submission" date="2006-06" db="EMBL/GenBank/DDBJ databases">
        <title>Complete sequence of chromosome of Mycobacterium sp. MCS.</title>
        <authorList>
            <consortium name="US DOE Joint Genome Institute"/>
            <person name="Copeland A."/>
            <person name="Lucas S."/>
            <person name="Lapidus A."/>
            <person name="Barry K."/>
            <person name="Detter J.C."/>
            <person name="Glavina del Rio T."/>
            <person name="Hammon N."/>
            <person name="Israni S."/>
            <person name="Dalin E."/>
            <person name="Tice H."/>
            <person name="Pitluck S."/>
            <person name="Martinez M."/>
            <person name="Schmutz J."/>
            <person name="Larimer F."/>
            <person name="Land M."/>
            <person name="Hauser L."/>
            <person name="Kyrpides N."/>
            <person name="Kim E."/>
            <person name="Miller C.D."/>
            <person name="Hughes J.E."/>
            <person name="Anderson A.J."/>
            <person name="Sims R.C."/>
            <person name="Richardson P."/>
        </authorList>
    </citation>
    <scope>NUCLEOTIDE SEQUENCE [LARGE SCALE GENOMIC DNA]</scope>
    <source>
        <strain>MCS</strain>
    </source>
</reference>
<proteinExistence type="inferred from homology"/>
<gene>
    <name evidence="1" type="primary">pyrD</name>
    <name type="ordered locus">Mmcs_3162</name>
</gene>
<organism>
    <name type="scientific">Mycobacterium sp. (strain MCS)</name>
    <dbReference type="NCBI Taxonomy" id="164756"/>
    <lineage>
        <taxon>Bacteria</taxon>
        <taxon>Bacillati</taxon>
        <taxon>Actinomycetota</taxon>
        <taxon>Actinomycetes</taxon>
        <taxon>Mycobacteriales</taxon>
        <taxon>Mycobacteriaceae</taxon>
        <taxon>Mycobacterium</taxon>
    </lineage>
</organism>